<feature type="chain" id="PRO_1000025263" description="Co-chaperonin GroES">
    <location>
        <begin position="1"/>
        <end position="95"/>
    </location>
</feature>
<sequence>MNIRPLQDRVLVRRAEEEKKSAGGIILTGSAQEKPSQGEVVAVGNGKKLDNGTTLPMDVKVGDKVLFGKYSGSEVKVGDETLLMMREEDIMGIIA</sequence>
<organism>
    <name type="scientific">Francisella tularensis subsp. tularensis (strain SCHU S4 / Schu 4)</name>
    <dbReference type="NCBI Taxonomy" id="177416"/>
    <lineage>
        <taxon>Bacteria</taxon>
        <taxon>Pseudomonadati</taxon>
        <taxon>Pseudomonadota</taxon>
        <taxon>Gammaproteobacteria</taxon>
        <taxon>Thiotrichales</taxon>
        <taxon>Francisellaceae</taxon>
        <taxon>Francisella</taxon>
    </lineage>
</organism>
<reference key="1">
    <citation type="journal article" date="2005" name="Nat. Genet.">
        <title>The complete genome sequence of Francisella tularensis, the causative agent of tularemia.</title>
        <authorList>
            <person name="Larsson P."/>
            <person name="Oyston P.C.F."/>
            <person name="Chain P."/>
            <person name="Chu M.C."/>
            <person name="Duffield M."/>
            <person name="Fuxelius H.-H."/>
            <person name="Garcia E."/>
            <person name="Haelltorp G."/>
            <person name="Johansson D."/>
            <person name="Isherwood K.E."/>
            <person name="Karp P.D."/>
            <person name="Larsson E."/>
            <person name="Liu Y."/>
            <person name="Michell S."/>
            <person name="Prior J."/>
            <person name="Prior R."/>
            <person name="Malfatti S."/>
            <person name="Sjoestedt A."/>
            <person name="Svensson K."/>
            <person name="Thompson N."/>
            <person name="Vergez L."/>
            <person name="Wagg J.K."/>
            <person name="Wren B.W."/>
            <person name="Lindler L.E."/>
            <person name="Andersson S.G.E."/>
            <person name="Forsman M."/>
            <person name="Titball R.W."/>
        </authorList>
    </citation>
    <scope>NUCLEOTIDE SEQUENCE [LARGE SCALE GENOMIC DNA]</scope>
    <source>
        <strain>SCHU S4 / Schu 4</strain>
    </source>
</reference>
<gene>
    <name evidence="1" type="primary">groES</name>
    <name evidence="1" type="synonym">groS</name>
    <name type="ordered locus">FTT_1695</name>
</gene>
<comment type="function">
    <text evidence="1">Together with the chaperonin GroEL, plays an essential role in assisting protein folding. The GroEL-GroES system forms a nano-cage that allows encapsulation of the non-native substrate proteins and provides a physical environment optimized to promote and accelerate protein folding. GroES binds to the apical surface of the GroEL ring, thereby capping the opening of the GroEL channel.</text>
</comment>
<comment type="subunit">
    <text evidence="1">Heptamer of 7 subunits arranged in a ring. Interacts with the chaperonin GroEL.</text>
</comment>
<comment type="subcellular location">
    <subcellularLocation>
        <location evidence="1">Cytoplasm</location>
    </subcellularLocation>
</comment>
<comment type="similarity">
    <text evidence="1">Belongs to the GroES chaperonin family.</text>
</comment>
<accession>Q5NEE2</accession>
<protein>
    <recommendedName>
        <fullName evidence="1">Co-chaperonin GroES</fullName>
    </recommendedName>
    <alternativeName>
        <fullName evidence="1">10 kDa chaperonin</fullName>
    </alternativeName>
    <alternativeName>
        <fullName evidence="1">Chaperonin-10</fullName>
        <shortName evidence="1">Cpn10</shortName>
    </alternativeName>
</protein>
<dbReference type="EMBL" id="AJ749949">
    <property type="protein sequence ID" value="CAG46328.1"/>
    <property type="molecule type" value="Genomic_DNA"/>
</dbReference>
<dbReference type="RefSeq" id="WP_003022662.1">
    <property type="nucleotide sequence ID" value="NZ_CP010290.1"/>
</dbReference>
<dbReference type="RefSeq" id="YP_170600.1">
    <property type="nucleotide sequence ID" value="NC_006570.2"/>
</dbReference>
<dbReference type="SMR" id="Q5NEE2"/>
<dbReference type="IntAct" id="Q5NEE2">
    <property type="interactions" value="2"/>
</dbReference>
<dbReference type="STRING" id="177416.FTT_1695"/>
<dbReference type="DNASU" id="3191890"/>
<dbReference type="EnsemblBacteria" id="CAG46328">
    <property type="protein sequence ID" value="CAG46328"/>
    <property type="gene ID" value="FTT_1695"/>
</dbReference>
<dbReference type="KEGG" id="ftu:FTT_1695"/>
<dbReference type="eggNOG" id="COG0234">
    <property type="taxonomic scope" value="Bacteria"/>
</dbReference>
<dbReference type="OrthoDB" id="9806791at2"/>
<dbReference type="Proteomes" id="UP000001174">
    <property type="component" value="Chromosome"/>
</dbReference>
<dbReference type="GO" id="GO:0005737">
    <property type="term" value="C:cytoplasm"/>
    <property type="evidence" value="ECO:0007669"/>
    <property type="project" value="UniProtKB-SubCell"/>
</dbReference>
<dbReference type="GO" id="GO:0005524">
    <property type="term" value="F:ATP binding"/>
    <property type="evidence" value="ECO:0007669"/>
    <property type="project" value="InterPro"/>
</dbReference>
<dbReference type="GO" id="GO:0046872">
    <property type="term" value="F:metal ion binding"/>
    <property type="evidence" value="ECO:0007669"/>
    <property type="project" value="TreeGrafter"/>
</dbReference>
<dbReference type="GO" id="GO:0044183">
    <property type="term" value="F:protein folding chaperone"/>
    <property type="evidence" value="ECO:0007669"/>
    <property type="project" value="InterPro"/>
</dbReference>
<dbReference type="GO" id="GO:0051087">
    <property type="term" value="F:protein-folding chaperone binding"/>
    <property type="evidence" value="ECO:0007669"/>
    <property type="project" value="TreeGrafter"/>
</dbReference>
<dbReference type="GO" id="GO:0051082">
    <property type="term" value="F:unfolded protein binding"/>
    <property type="evidence" value="ECO:0007669"/>
    <property type="project" value="TreeGrafter"/>
</dbReference>
<dbReference type="GO" id="GO:0051085">
    <property type="term" value="P:chaperone cofactor-dependent protein refolding"/>
    <property type="evidence" value="ECO:0007669"/>
    <property type="project" value="TreeGrafter"/>
</dbReference>
<dbReference type="CDD" id="cd00320">
    <property type="entry name" value="cpn10"/>
    <property type="match status" value="1"/>
</dbReference>
<dbReference type="FunFam" id="2.30.33.40:FF:000001">
    <property type="entry name" value="10 kDa chaperonin"/>
    <property type="match status" value="1"/>
</dbReference>
<dbReference type="Gene3D" id="2.30.33.40">
    <property type="entry name" value="GroES chaperonin"/>
    <property type="match status" value="1"/>
</dbReference>
<dbReference type="HAMAP" id="MF_00580">
    <property type="entry name" value="CH10"/>
    <property type="match status" value="1"/>
</dbReference>
<dbReference type="InterPro" id="IPR020818">
    <property type="entry name" value="Chaperonin_GroES"/>
</dbReference>
<dbReference type="InterPro" id="IPR037124">
    <property type="entry name" value="Chaperonin_GroES_sf"/>
</dbReference>
<dbReference type="InterPro" id="IPR018369">
    <property type="entry name" value="Chaprnonin_Cpn10_CS"/>
</dbReference>
<dbReference type="InterPro" id="IPR011032">
    <property type="entry name" value="GroES-like_sf"/>
</dbReference>
<dbReference type="NCBIfam" id="NF001527">
    <property type="entry name" value="PRK00364.1-2"/>
    <property type="match status" value="1"/>
</dbReference>
<dbReference type="NCBIfam" id="NF001531">
    <property type="entry name" value="PRK00364.2-2"/>
    <property type="match status" value="1"/>
</dbReference>
<dbReference type="NCBIfam" id="NF001533">
    <property type="entry name" value="PRK00364.2-4"/>
    <property type="match status" value="1"/>
</dbReference>
<dbReference type="PANTHER" id="PTHR10772">
    <property type="entry name" value="10 KDA HEAT SHOCK PROTEIN"/>
    <property type="match status" value="1"/>
</dbReference>
<dbReference type="PANTHER" id="PTHR10772:SF58">
    <property type="entry name" value="CO-CHAPERONIN GROES"/>
    <property type="match status" value="1"/>
</dbReference>
<dbReference type="Pfam" id="PF00166">
    <property type="entry name" value="Cpn10"/>
    <property type="match status" value="1"/>
</dbReference>
<dbReference type="PRINTS" id="PR00297">
    <property type="entry name" value="CHAPERONIN10"/>
</dbReference>
<dbReference type="SMART" id="SM00883">
    <property type="entry name" value="Cpn10"/>
    <property type="match status" value="1"/>
</dbReference>
<dbReference type="SUPFAM" id="SSF50129">
    <property type="entry name" value="GroES-like"/>
    <property type="match status" value="1"/>
</dbReference>
<dbReference type="PROSITE" id="PS00681">
    <property type="entry name" value="CHAPERONINS_CPN10"/>
    <property type="match status" value="1"/>
</dbReference>
<keyword id="KW-0143">Chaperone</keyword>
<keyword id="KW-0963">Cytoplasm</keyword>
<keyword id="KW-1185">Reference proteome</keyword>
<evidence type="ECO:0000255" key="1">
    <source>
        <dbReference type="HAMAP-Rule" id="MF_00580"/>
    </source>
</evidence>
<proteinExistence type="inferred from homology"/>
<name>CH10_FRATT</name>